<proteinExistence type="inferred from homology"/>
<name>SLMA_YERPN</name>
<reference key="1">
    <citation type="journal article" date="2006" name="J. Bacteriol.">
        <title>Complete genome sequence of Yersinia pestis strains Antiqua and Nepal516: evidence of gene reduction in an emerging pathogen.</title>
        <authorList>
            <person name="Chain P.S.G."/>
            <person name="Hu P."/>
            <person name="Malfatti S.A."/>
            <person name="Radnedge L."/>
            <person name="Larimer F."/>
            <person name="Vergez L.M."/>
            <person name="Worsham P."/>
            <person name="Chu M.C."/>
            <person name="Andersen G.L."/>
        </authorList>
    </citation>
    <scope>NUCLEOTIDE SEQUENCE [LARGE SCALE GENOMIC DNA]</scope>
    <source>
        <strain>Nepal516</strain>
    </source>
</reference>
<reference key="2">
    <citation type="submission" date="2009-04" db="EMBL/GenBank/DDBJ databases">
        <title>Yersinia pestis Nepal516A whole genome shotgun sequencing project.</title>
        <authorList>
            <person name="Plunkett G. III"/>
            <person name="Anderson B.D."/>
            <person name="Baumler D.J."/>
            <person name="Burland V."/>
            <person name="Cabot E.L."/>
            <person name="Glasner J.D."/>
            <person name="Mau B."/>
            <person name="Neeno-Eckwall E."/>
            <person name="Perna N.T."/>
            <person name="Munk A.C."/>
            <person name="Tapia R."/>
            <person name="Green L.D."/>
            <person name="Rogers Y.C."/>
            <person name="Detter J.C."/>
            <person name="Bruce D.C."/>
            <person name="Brettin T.S."/>
        </authorList>
    </citation>
    <scope>NUCLEOTIDE SEQUENCE [LARGE SCALE GENOMIC DNA]</scope>
    <source>
        <strain>Nepal516</strain>
    </source>
</reference>
<feature type="chain" id="PRO_1000070541" description="Nucleoid occlusion factor SlmA">
    <location>
        <begin position="1"/>
        <end position="198"/>
    </location>
</feature>
<feature type="domain" description="HTH tetR-type" evidence="1">
    <location>
        <begin position="9"/>
        <end position="70"/>
    </location>
</feature>
<feature type="DNA-binding region" description="H-T-H motif" evidence="1">
    <location>
        <begin position="33"/>
        <end position="52"/>
    </location>
</feature>
<feature type="coiled-coil region" evidence="1">
    <location>
        <begin position="119"/>
        <end position="144"/>
    </location>
</feature>
<comment type="function">
    <text evidence="1">Required for nucleoid occlusion (NO) phenomenon, which prevents Z-ring formation and cell division over the nucleoid. Acts as a DNA-associated cell division inhibitor that binds simultaneously chromosomal DNA and FtsZ, and disrupts the assembly of FtsZ polymers. SlmA-DNA-binding sequences (SBS) are dispersed on non-Ter regions of the chromosome, preventing FtsZ polymerization at these regions.</text>
</comment>
<comment type="subunit">
    <text evidence="1">Homodimer. Interacts with FtsZ.</text>
</comment>
<comment type="subcellular location">
    <subcellularLocation>
        <location evidence="1">Cytoplasm</location>
        <location evidence="1">Nucleoid</location>
    </subcellularLocation>
</comment>
<comment type="similarity">
    <text evidence="1">Belongs to the nucleoid occlusion factor SlmA family.</text>
</comment>
<dbReference type="EMBL" id="CP000305">
    <property type="protein sequence ID" value="ABG20131.1"/>
    <property type="molecule type" value="Genomic_DNA"/>
</dbReference>
<dbReference type="EMBL" id="ACNQ01000019">
    <property type="protein sequence ID" value="EEO74717.1"/>
    <property type="molecule type" value="Genomic_DNA"/>
</dbReference>
<dbReference type="RefSeq" id="WP_002208995.1">
    <property type="nucleotide sequence ID" value="NZ_ACNQ01000019.1"/>
</dbReference>
<dbReference type="SMR" id="Q1CCZ9"/>
<dbReference type="GeneID" id="96663527"/>
<dbReference type="KEGG" id="ypn:YPN_3804"/>
<dbReference type="HOGENOM" id="CLU_069356_5_0_6"/>
<dbReference type="Proteomes" id="UP000008936">
    <property type="component" value="Chromosome"/>
</dbReference>
<dbReference type="GO" id="GO:0043590">
    <property type="term" value="C:bacterial nucleoid"/>
    <property type="evidence" value="ECO:0007669"/>
    <property type="project" value="UniProtKB-UniRule"/>
</dbReference>
<dbReference type="GO" id="GO:0005737">
    <property type="term" value="C:cytoplasm"/>
    <property type="evidence" value="ECO:0007669"/>
    <property type="project" value="UniProtKB-UniRule"/>
</dbReference>
<dbReference type="GO" id="GO:0003700">
    <property type="term" value="F:DNA-binding transcription factor activity"/>
    <property type="evidence" value="ECO:0007669"/>
    <property type="project" value="TreeGrafter"/>
</dbReference>
<dbReference type="GO" id="GO:0000976">
    <property type="term" value="F:transcription cis-regulatory region binding"/>
    <property type="evidence" value="ECO:0007669"/>
    <property type="project" value="TreeGrafter"/>
</dbReference>
<dbReference type="GO" id="GO:0051301">
    <property type="term" value="P:cell division"/>
    <property type="evidence" value="ECO:0007669"/>
    <property type="project" value="UniProtKB-KW"/>
</dbReference>
<dbReference type="GO" id="GO:0010974">
    <property type="term" value="P:negative regulation of division septum assembly"/>
    <property type="evidence" value="ECO:0007669"/>
    <property type="project" value="InterPro"/>
</dbReference>
<dbReference type="FunFam" id="1.10.357.10:FF:000002">
    <property type="entry name" value="Nucleoid occlusion factor SlmA"/>
    <property type="match status" value="1"/>
</dbReference>
<dbReference type="Gene3D" id="1.10.357.10">
    <property type="entry name" value="Tetracycline Repressor, domain 2"/>
    <property type="match status" value="1"/>
</dbReference>
<dbReference type="HAMAP" id="MF_01839">
    <property type="entry name" value="NO_factor_SlmA"/>
    <property type="match status" value="1"/>
</dbReference>
<dbReference type="InterPro" id="IPR023772">
    <property type="entry name" value="DNA-bd_HTH_TetR-type_CS"/>
</dbReference>
<dbReference type="InterPro" id="IPR009057">
    <property type="entry name" value="Homeodomain-like_sf"/>
</dbReference>
<dbReference type="InterPro" id="IPR050109">
    <property type="entry name" value="HTH-type_TetR-like_transc_reg"/>
</dbReference>
<dbReference type="InterPro" id="IPR001647">
    <property type="entry name" value="HTH_TetR"/>
</dbReference>
<dbReference type="InterPro" id="IPR023769">
    <property type="entry name" value="NO_SlmA"/>
</dbReference>
<dbReference type="InterPro" id="IPR054580">
    <property type="entry name" value="SlmA-like_C"/>
</dbReference>
<dbReference type="InterPro" id="IPR036271">
    <property type="entry name" value="Tet_transcr_reg_TetR-rel_C_sf"/>
</dbReference>
<dbReference type="NCBIfam" id="NF007015">
    <property type="entry name" value="PRK09480.1"/>
    <property type="match status" value="1"/>
</dbReference>
<dbReference type="PANTHER" id="PTHR30055">
    <property type="entry name" value="HTH-TYPE TRANSCRIPTIONAL REGULATOR RUTR"/>
    <property type="match status" value="1"/>
</dbReference>
<dbReference type="PANTHER" id="PTHR30055:SF183">
    <property type="entry name" value="NUCLEOID OCCLUSION FACTOR SLMA"/>
    <property type="match status" value="1"/>
</dbReference>
<dbReference type="Pfam" id="PF22276">
    <property type="entry name" value="SlmA-like_C"/>
    <property type="match status" value="1"/>
</dbReference>
<dbReference type="Pfam" id="PF00440">
    <property type="entry name" value="TetR_N"/>
    <property type="match status" value="1"/>
</dbReference>
<dbReference type="SUPFAM" id="SSF46689">
    <property type="entry name" value="Homeodomain-like"/>
    <property type="match status" value="1"/>
</dbReference>
<dbReference type="SUPFAM" id="SSF48498">
    <property type="entry name" value="Tetracyclin repressor-like, C-terminal domain"/>
    <property type="match status" value="1"/>
</dbReference>
<dbReference type="PROSITE" id="PS01081">
    <property type="entry name" value="HTH_TETR_1"/>
    <property type="match status" value="1"/>
</dbReference>
<dbReference type="PROSITE" id="PS50977">
    <property type="entry name" value="HTH_TETR_2"/>
    <property type="match status" value="1"/>
</dbReference>
<organism>
    <name type="scientific">Yersinia pestis bv. Antiqua (strain Nepal516)</name>
    <dbReference type="NCBI Taxonomy" id="377628"/>
    <lineage>
        <taxon>Bacteria</taxon>
        <taxon>Pseudomonadati</taxon>
        <taxon>Pseudomonadota</taxon>
        <taxon>Gammaproteobacteria</taxon>
        <taxon>Enterobacterales</taxon>
        <taxon>Yersiniaceae</taxon>
        <taxon>Yersinia</taxon>
    </lineage>
</organism>
<accession>Q1CCZ9</accession>
<accession>D1Q2G4</accession>
<sequence>MAEKENTKRNRREEILQALAQMLESSDGSQRITTAKLAANVGVSEAALYRHFPSKTRMFDSLIEFIEDSLMSRINLILQDEKETFNRLRLILLLVLGFAERNPGLTRIMTGHALMFEQDRLQGRINQLFERIEMQLRQVLREKKLRDGQGFIHDEALLATQLLAFCEGMLSRFVRSEFRYCPTQEFDSRWPLIVAQLQ</sequence>
<evidence type="ECO:0000255" key="1">
    <source>
        <dbReference type="HAMAP-Rule" id="MF_01839"/>
    </source>
</evidence>
<keyword id="KW-0131">Cell cycle</keyword>
<keyword id="KW-0132">Cell division</keyword>
<keyword id="KW-0175">Coiled coil</keyword>
<keyword id="KW-0963">Cytoplasm</keyword>
<keyword id="KW-0238">DNA-binding</keyword>
<gene>
    <name evidence="1" type="primary">slmA</name>
    <name type="ordered locus">YPN_3804</name>
    <name type="ORF">YP516_4324</name>
</gene>
<protein>
    <recommendedName>
        <fullName evidence="1">Nucleoid occlusion factor SlmA</fullName>
    </recommendedName>
</protein>